<organism>
    <name type="scientific">Mus musculus</name>
    <name type="common">Mouse</name>
    <dbReference type="NCBI Taxonomy" id="10090"/>
    <lineage>
        <taxon>Eukaryota</taxon>
        <taxon>Metazoa</taxon>
        <taxon>Chordata</taxon>
        <taxon>Craniata</taxon>
        <taxon>Vertebrata</taxon>
        <taxon>Euteleostomi</taxon>
        <taxon>Mammalia</taxon>
        <taxon>Eutheria</taxon>
        <taxon>Euarchontoglires</taxon>
        <taxon>Glires</taxon>
        <taxon>Rodentia</taxon>
        <taxon>Myomorpha</taxon>
        <taxon>Muroidea</taxon>
        <taxon>Muridae</taxon>
        <taxon>Murinae</taxon>
        <taxon>Mus</taxon>
        <taxon>Mus</taxon>
    </lineage>
</organism>
<protein>
    <recommendedName>
        <fullName>ATP-dependent RNA helicase DDX25</fullName>
        <ecNumber>3.6.4.13</ecNumber>
    </recommendedName>
    <alternativeName>
        <fullName>DEAD box protein 25</fullName>
    </alternativeName>
    <alternativeName>
        <fullName>Gonadotropin-regulated testicular RNA helicase</fullName>
    </alternativeName>
</protein>
<comment type="function">
    <text evidence="5">ATP-dependent RNA helicase. Required for mRNA export and translation regulation during spermatid development.</text>
</comment>
<comment type="catalytic activity">
    <reaction>
        <text>ATP + H2O = ADP + phosphate + H(+)</text>
        <dbReference type="Rhea" id="RHEA:13065"/>
        <dbReference type="ChEBI" id="CHEBI:15377"/>
        <dbReference type="ChEBI" id="CHEBI:15378"/>
        <dbReference type="ChEBI" id="CHEBI:30616"/>
        <dbReference type="ChEBI" id="CHEBI:43474"/>
        <dbReference type="ChEBI" id="CHEBI:456216"/>
        <dbReference type="EC" id="3.6.4.13"/>
    </reaction>
</comment>
<comment type="subcellular location">
    <subcellularLocation>
        <location evidence="4 5">Cytoplasm</location>
    </subcellularLocation>
    <subcellularLocation>
        <location evidence="4 5">Nucleus</location>
    </subcellularLocation>
    <text evidence="4 5 6">Detected in both cytoplasm and nucleus of testicular cells. Also detected in chromatoid bodies of round spermatids.</text>
</comment>
<comment type="alternative products">
    <event type="alternative initiation"/>
    <isoform>
        <id>Q9QY15-1</id>
        <name>1</name>
        <sequence type="displayed"/>
    </isoform>
    <isoform>
        <id>Q9QY15-2</id>
        <name>2</name>
        <sequence type="described" ref="VSP_018876"/>
    </isoform>
</comment>
<comment type="tissue specificity">
    <text evidence="7">Isoform 1 is expressed in germ cells. Isoform 2 is expressed in Leydig cells and in round spermatids of adult testis upon gonadotropin stimulation.</text>
</comment>
<comment type="PTM">
    <text evidence="5">Phosphorylated on threonine residues. The phosphorylated form is found in the cytoplasm but not in the nucleus.</text>
</comment>
<comment type="disruption phenotype">
    <text evidence="4">Male mice display normal sexual behavior but are sterile with testes that are 25% smaller than the wild-type. Round spermatids arrest at step 8 and fail to elongate. Chromatoid bodies are unusually condensed, greatly reduced in size and lack the typical amorphous texture throughout all steps of spermiogenesis.</text>
</comment>
<comment type="similarity">
    <text evidence="8">Belongs to the DEAD box helicase family.</text>
</comment>
<sequence>MASLLWGGDAGAAESERLNSHFSNLVHPRKNLRGIRSTTVPNIDGSLNTEDDDDDEDDVVDLAANSLLNKLIRQSLIESSHRVEVLQKDPSSPLYSVKTFEELRLKEELLKGIYAMGFNRPSKIQEMALPMMLAHPPQNLIAQSQSGTGKTAAFVLAMLSRVNALELFPQCLCLAPTYELALQTGRVVERMGKFCVDVEVMYAIRGNRIPRGTEVTKQIIIGTPGTVLDWCFKRKLIDLTKIRVFVLDEADVMIDTQGFSDQSIRIQRALPSECQMLLFSATFEDSVWQFAERIIPDPNVIKLRKEELTLNNIRQYYVLCENRKGKYQALCNIYGGITIGQAIIFCQTRRNAKWLTVEMMQDGHQVSLLSGELTVEQRASIIQRFRDGKEKVLITTNVCARGIDVKQVTIVVNFDLPVNQSEEPDYETYLHRIGRTGRFGKKGLAFNMIEVDKLPLLMKIQDHFNSNIKQLDPEDMDEIEKIEY</sequence>
<evidence type="ECO:0000250" key="1"/>
<evidence type="ECO:0000255" key="2">
    <source>
        <dbReference type="PROSITE-ProRule" id="PRU00541"/>
    </source>
</evidence>
<evidence type="ECO:0000255" key="3">
    <source>
        <dbReference type="PROSITE-ProRule" id="PRU00542"/>
    </source>
</evidence>
<evidence type="ECO:0000269" key="4">
    <source>
    </source>
</evidence>
<evidence type="ECO:0000269" key="5">
    <source>
    </source>
</evidence>
<evidence type="ECO:0000269" key="6">
    <source>
    </source>
</evidence>
<evidence type="ECO:0000269" key="7">
    <source ref="2"/>
</evidence>
<evidence type="ECO:0000305" key="8"/>
<evidence type="ECO:0007744" key="9">
    <source>
    </source>
</evidence>
<feature type="chain" id="PRO_0000030815" description="ATP-dependent RNA helicase DDX25">
    <location>
        <begin position="1"/>
        <end position="484"/>
    </location>
</feature>
<feature type="domain" description="Helicase ATP-binding" evidence="2">
    <location>
        <begin position="131"/>
        <end position="301"/>
    </location>
</feature>
<feature type="domain" description="Helicase C-terminal" evidence="3">
    <location>
        <begin position="312"/>
        <end position="479"/>
    </location>
</feature>
<feature type="short sequence motif" description="Nuclear export signal" evidence="1">
    <location>
        <begin position="62"/>
        <end position="75"/>
    </location>
</feature>
<feature type="short sequence motif" description="Q motif">
    <location>
        <begin position="98"/>
        <end position="126"/>
    </location>
</feature>
<feature type="short sequence motif" description="Nuclear localization signal" evidence="1">
    <location>
        <begin position="101"/>
        <end position="115"/>
    </location>
</feature>
<feature type="short sequence motif" description="DEAD box">
    <location>
        <begin position="248"/>
        <end position="251"/>
    </location>
</feature>
<feature type="binding site" evidence="2">
    <location>
        <begin position="144"/>
        <end position="151"/>
    </location>
    <ligand>
        <name>ATP</name>
        <dbReference type="ChEBI" id="CHEBI:30616"/>
    </ligand>
</feature>
<feature type="modified residue" description="Phosphothreonine" evidence="9">
    <location>
        <position position="49"/>
    </location>
</feature>
<feature type="splice variant" id="VSP_018876" description="In isoform 2." evidence="8">
    <location>
        <begin position="1"/>
        <end position="115"/>
    </location>
</feature>
<feature type="sequence conflict" description="In Ref. 5; AAH24852." evidence="8" ref="5">
    <original>H</original>
    <variation>P</variation>
    <location>
        <position position="463"/>
    </location>
</feature>
<dbReference type="EC" id="3.6.4.13"/>
<dbReference type="EMBL" id="AF142630">
    <property type="protein sequence ID" value="AAF21361.2"/>
    <property type="molecule type" value="mRNA"/>
</dbReference>
<dbReference type="EMBL" id="AY380091">
    <property type="protein sequence ID" value="AAR26239.1"/>
    <property type="molecule type" value="Genomic_DNA"/>
</dbReference>
<dbReference type="EMBL" id="AY380080">
    <property type="protein sequence ID" value="AAR26239.1"/>
    <property type="status" value="JOINED"/>
    <property type="molecule type" value="Genomic_DNA"/>
</dbReference>
<dbReference type="EMBL" id="AY380081">
    <property type="protein sequence ID" value="AAR26239.1"/>
    <property type="status" value="JOINED"/>
    <property type="molecule type" value="Genomic_DNA"/>
</dbReference>
<dbReference type="EMBL" id="AY380082">
    <property type="protein sequence ID" value="AAR26239.1"/>
    <property type="status" value="JOINED"/>
    <property type="molecule type" value="Genomic_DNA"/>
</dbReference>
<dbReference type="EMBL" id="AY380083">
    <property type="protein sequence ID" value="AAR26239.1"/>
    <property type="status" value="JOINED"/>
    <property type="molecule type" value="Genomic_DNA"/>
</dbReference>
<dbReference type="EMBL" id="AY380084">
    <property type="protein sequence ID" value="AAR26239.1"/>
    <property type="status" value="JOINED"/>
    <property type="molecule type" value="Genomic_DNA"/>
</dbReference>
<dbReference type="EMBL" id="AY380085">
    <property type="protein sequence ID" value="AAR26239.1"/>
    <property type="status" value="JOINED"/>
    <property type="molecule type" value="Genomic_DNA"/>
</dbReference>
<dbReference type="EMBL" id="AY380086">
    <property type="protein sequence ID" value="AAR26239.1"/>
    <property type="status" value="JOINED"/>
    <property type="molecule type" value="Genomic_DNA"/>
</dbReference>
<dbReference type="EMBL" id="AY380087">
    <property type="protein sequence ID" value="AAR26239.1"/>
    <property type="status" value="JOINED"/>
    <property type="molecule type" value="Genomic_DNA"/>
</dbReference>
<dbReference type="EMBL" id="AY380088">
    <property type="protein sequence ID" value="AAR26239.1"/>
    <property type="status" value="JOINED"/>
    <property type="molecule type" value="Genomic_DNA"/>
</dbReference>
<dbReference type="EMBL" id="AY380089">
    <property type="protein sequence ID" value="AAR26239.1"/>
    <property type="status" value="JOINED"/>
    <property type="molecule type" value="Genomic_DNA"/>
</dbReference>
<dbReference type="EMBL" id="AY380090">
    <property type="protein sequence ID" value="AAR26239.1"/>
    <property type="status" value="JOINED"/>
    <property type="molecule type" value="Genomic_DNA"/>
</dbReference>
<dbReference type="EMBL" id="AK050693">
    <property type="protein sequence ID" value="BAC34384.1"/>
    <property type="molecule type" value="mRNA"/>
</dbReference>
<dbReference type="EMBL" id="AK078340">
    <property type="protein sequence ID" value="BAC37227.1"/>
    <property type="molecule type" value="mRNA"/>
</dbReference>
<dbReference type="EMBL" id="BC024852">
    <property type="protein sequence ID" value="AAH24852.1"/>
    <property type="molecule type" value="mRNA"/>
</dbReference>
<dbReference type="EMBL" id="BC061130">
    <property type="protein sequence ID" value="AAH61130.2"/>
    <property type="molecule type" value="mRNA"/>
</dbReference>
<dbReference type="CCDS" id="CCDS52753.1">
    <molecule id="Q9QY15-1"/>
</dbReference>
<dbReference type="RefSeq" id="NP_038960.2">
    <molecule id="Q9QY15-1"/>
    <property type="nucleotide sequence ID" value="NM_013932.4"/>
</dbReference>
<dbReference type="SMR" id="Q9QY15"/>
<dbReference type="BioGRID" id="206034">
    <property type="interactions" value="1"/>
</dbReference>
<dbReference type="FunCoup" id="Q9QY15">
    <property type="interactions" value="1647"/>
</dbReference>
<dbReference type="IntAct" id="Q9QY15">
    <property type="interactions" value="1"/>
</dbReference>
<dbReference type="MINT" id="Q9QY15"/>
<dbReference type="STRING" id="10090.ENSMUSP00000034612"/>
<dbReference type="iPTMnet" id="Q9QY15"/>
<dbReference type="PhosphoSitePlus" id="Q9QY15"/>
<dbReference type="SwissPalm" id="Q9QY15"/>
<dbReference type="jPOST" id="Q9QY15"/>
<dbReference type="PaxDb" id="10090-ENSMUSP00000034612"/>
<dbReference type="PeptideAtlas" id="Q9QY15"/>
<dbReference type="ProteomicsDB" id="279180">
    <molecule id="Q9QY15-1"/>
</dbReference>
<dbReference type="ProteomicsDB" id="279181">
    <molecule id="Q9QY15-2"/>
</dbReference>
<dbReference type="Pumba" id="Q9QY15"/>
<dbReference type="Antibodypedia" id="9318">
    <property type="antibodies" value="63 antibodies from 21 providers"/>
</dbReference>
<dbReference type="DNASU" id="30959"/>
<dbReference type="Ensembl" id="ENSMUST00000034612.7">
    <molecule id="Q9QY15-1"/>
    <property type="protein sequence ID" value="ENSMUSP00000034612.5"/>
    <property type="gene ID" value="ENSMUSG00000032101.7"/>
</dbReference>
<dbReference type="GeneID" id="30959"/>
<dbReference type="KEGG" id="mmu:30959"/>
<dbReference type="UCSC" id="uc012gqi.1">
    <molecule id="Q9QY15-1"/>
    <property type="organism name" value="mouse"/>
</dbReference>
<dbReference type="AGR" id="MGI:1353582"/>
<dbReference type="CTD" id="29118"/>
<dbReference type="MGI" id="MGI:1353582">
    <property type="gene designation" value="Ddx25"/>
</dbReference>
<dbReference type="VEuPathDB" id="HostDB:ENSMUSG00000032101"/>
<dbReference type="eggNOG" id="KOG0332">
    <property type="taxonomic scope" value="Eukaryota"/>
</dbReference>
<dbReference type="GeneTree" id="ENSGT00940000159712"/>
<dbReference type="HOGENOM" id="CLU_003041_1_0_1"/>
<dbReference type="InParanoid" id="Q9QY15"/>
<dbReference type="OMA" id="DFKNLCM"/>
<dbReference type="OrthoDB" id="10265785at2759"/>
<dbReference type="PhylomeDB" id="Q9QY15"/>
<dbReference type="TreeFam" id="TF314957"/>
<dbReference type="BRENDA" id="3.6.4.13">
    <property type="organism ID" value="3474"/>
</dbReference>
<dbReference type="BioGRID-ORCS" id="30959">
    <property type="hits" value="2 hits in 81 CRISPR screens"/>
</dbReference>
<dbReference type="CD-CODE" id="DE1E139C">
    <property type="entry name" value="Chromatoid body"/>
</dbReference>
<dbReference type="ChiTaRS" id="Ddx25">
    <property type="organism name" value="mouse"/>
</dbReference>
<dbReference type="PRO" id="PR:Q9QY15"/>
<dbReference type="Proteomes" id="UP000000589">
    <property type="component" value="Chromosome 9"/>
</dbReference>
<dbReference type="RNAct" id="Q9QY15">
    <property type="molecule type" value="protein"/>
</dbReference>
<dbReference type="Bgee" id="ENSMUSG00000032101">
    <property type="expression patterns" value="Expressed in seminiferous tubule of testis and 150 other cell types or tissues"/>
</dbReference>
<dbReference type="GO" id="GO:0033391">
    <property type="term" value="C:chromatoid body"/>
    <property type="evidence" value="ECO:0000314"/>
    <property type="project" value="UniProtKB"/>
</dbReference>
<dbReference type="GO" id="GO:0005737">
    <property type="term" value="C:cytoplasm"/>
    <property type="evidence" value="ECO:0000314"/>
    <property type="project" value="UniProtKB"/>
</dbReference>
<dbReference type="GO" id="GO:0005634">
    <property type="term" value="C:nucleus"/>
    <property type="evidence" value="ECO:0000314"/>
    <property type="project" value="UniProtKB"/>
</dbReference>
<dbReference type="GO" id="GO:0005524">
    <property type="term" value="F:ATP binding"/>
    <property type="evidence" value="ECO:0000314"/>
    <property type="project" value="UniProtKB"/>
</dbReference>
<dbReference type="GO" id="GO:0016887">
    <property type="term" value="F:ATP hydrolysis activity"/>
    <property type="evidence" value="ECO:0007669"/>
    <property type="project" value="RHEA"/>
</dbReference>
<dbReference type="GO" id="GO:0003723">
    <property type="term" value="F:RNA binding"/>
    <property type="evidence" value="ECO:0007669"/>
    <property type="project" value="UniProtKB-KW"/>
</dbReference>
<dbReference type="GO" id="GO:0003724">
    <property type="term" value="F:RNA helicase activity"/>
    <property type="evidence" value="ECO:0000314"/>
    <property type="project" value="UniProtKB"/>
</dbReference>
<dbReference type="GO" id="GO:0006406">
    <property type="term" value="P:mRNA export from nucleus"/>
    <property type="evidence" value="ECO:0000314"/>
    <property type="project" value="UniProtKB"/>
</dbReference>
<dbReference type="GO" id="GO:0006417">
    <property type="term" value="P:regulation of translation"/>
    <property type="evidence" value="ECO:0000314"/>
    <property type="project" value="UniProtKB"/>
</dbReference>
<dbReference type="GO" id="GO:0007286">
    <property type="term" value="P:spermatid development"/>
    <property type="evidence" value="ECO:0000314"/>
    <property type="project" value="UniProtKB"/>
</dbReference>
<dbReference type="CDD" id="cd18787">
    <property type="entry name" value="SF2_C_DEAD"/>
    <property type="match status" value="1"/>
</dbReference>
<dbReference type="FunFam" id="3.40.50.300:FF:000318">
    <property type="entry name" value="ATP-dependent RNA helicase DDX19B"/>
    <property type="match status" value="1"/>
</dbReference>
<dbReference type="FunFam" id="3.40.50.300:FF:000357">
    <property type="entry name" value="ATP-dependent RNA helicase DDX19B"/>
    <property type="match status" value="1"/>
</dbReference>
<dbReference type="Gene3D" id="6.10.250.2170">
    <property type="match status" value="1"/>
</dbReference>
<dbReference type="Gene3D" id="3.40.50.300">
    <property type="entry name" value="P-loop containing nucleotide triphosphate hydrolases"/>
    <property type="match status" value="2"/>
</dbReference>
<dbReference type="InterPro" id="IPR011545">
    <property type="entry name" value="DEAD/DEAH_box_helicase_dom"/>
</dbReference>
<dbReference type="InterPro" id="IPR014001">
    <property type="entry name" value="Helicase_ATP-bd"/>
</dbReference>
<dbReference type="InterPro" id="IPR001650">
    <property type="entry name" value="Helicase_C-like"/>
</dbReference>
<dbReference type="InterPro" id="IPR027417">
    <property type="entry name" value="P-loop_NTPase"/>
</dbReference>
<dbReference type="InterPro" id="IPR014014">
    <property type="entry name" value="RNA_helicase_DEAD_Q_motif"/>
</dbReference>
<dbReference type="PANTHER" id="PTHR47958">
    <property type="entry name" value="ATP-DEPENDENT RNA HELICASE DBP3"/>
    <property type="match status" value="1"/>
</dbReference>
<dbReference type="Pfam" id="PF00270">
    <property type="entry name" value="DEAD"/>
    <property type="match status" value="1"/>
</dbReference>
<dbReference type="Pfam" id="PF00271">
    <property type="entry name" value="Helicase_C"/>
    <property type="match status" value="1"/>
</dbReference>
<dbReference type="SMART" id="SM00487">
    <property type="entry name" value="DEXDc"/>
    <property type="match status" value="1"/>
</dbReference>
<dbReference type="SMART" id="SM00490">
    <property type="entry name" value="HELICc"/>
    <property type="match status" value="1"/>
</dbReference>
<dbReference type="SUPFAM" id="SSF52540">
    <property type="entry name" value="P-loop containing nucleoside triphosphate hydrolases"/>
    <property type="match status" value="1"/>
</dbReference>
<dbReference type="PROSITE" id="PS51192">
    <property type="entry name" value="HELICASE_ATP_BIND_1"/>
    <property type="match status" value="1"/>
</dbReference>
<dbReference type="PROSITE" id="PS51194">
    <property type="entry name" value="HELICASE_CTER"/>
    <property type="match status" value="1"/>
</dbReference>
<dbReference type="PROSITE" id="PS51195">
    <property type="entry name" value="Q_MOTIF"/>
    <property type="match status" value="1"/>
</dbReference>
<accession>Q9QY15</accession>
<accession>Q53Z03</accession>
<accession>Q7TMB5</accession>
<accession>Q8R1B6</accession>
<reference key="1">
    <citation type="journal article" date="1999" name="J. Biol. Chem.">
        <title>A novel gonadotropin-regulated testicular RNA helicase: a new member of the DEAD-box family.</title>
        <authorList>
            <person name="Tang P.-Z."/>
            <person name="Tsai-Morris C.-H."/>
            <person name="Dufau M.L."/>
        </authorList>
    </citation>
    <scope>NUCLEOTIDE SEQUENCE [MRNA]</scope>
    <source>
        <strain>BALB/cJ</strain>
        <tissue>Testis</tissue>
    </source>
</reference>
<reference key="2">
    <citation type="submission" date="2003-05" db="EMBL/GenBank/DDBJ databases">
        <authorList>
            <person name="Tang P.-Z."/>
            <person name="Tsai-Morris C.-H."/>
            <person name="Dufau M.L."/>
        </authorList>
    </citation>
    <scope>SEQUENCE REVISION TO N-TERMINUS</scope>
    <scope>ALTERNATIVE INITIATION</scope>
    <scope>TISSUE SPECIFICITY</scope>
</reference>
<reference key="3">
    <citation type="journal article" date="2004" name="Proc. Natl. Acad. Sci. U.S.A.">
        <title>Gonadotropin-regulated testicular RNA helicase (GRTH/Ddx25) is essential for spermatid development and completion of spermatogenesis.</title>
        <authorList>
            <person name="Tsai-Morris C.-H."/>
            <person name="Sheng Y."/>
            <person name="Lee E."/>
            <person name="Lei K.-J."/>
            <person name="Dufau M.L."/>
        </authorList>
    </citation>
    <scope>NUCLEOTIDE SEQUENCE [GENOMIC DNA]</scope>
    <scope>SUBCELLULAR LOCATION</scope>
    <scope>DISRUPTION PHENOTYPE</scope>
    <source>
        <strain>129/SvJ</strain>
    </source>
</reference>
<reference key="4">
    <citation type="journal article" date="2005" name="Science">
        <title>The transcriptional landscape of the mammalian genome.</title>
        <authorList>
            <person name="Carninci P."/>
            <person name="Kasukawa T."/>
            <person name="Katayama S."/>
            <person name="Gough J."/>
            <person name="Frith M.C."/>
            <person name="Maeda N."/>
            <person name="Oyama R."/>
            <person name="Ravasi T."/>
            <person name="Lenhard B."/>
            <person name="Wells C."/>
            <person name="Kodzius R."/>
            <person name="Shimokawa K."/>
            <person name="Bajic V.B."/>
            <person name="Brenner S.E."/>
            <person name="Batalov S."/>
            <person name="Forrest A.R."/>
            <person name="Zavolan M."/>
            <person name="Davis M.J."/>
            <person name="Wilming L.G."/>
            <person name="Aidinis V."/>
            <person name="Allen J.E."/>
            <person name="Ambesi-Impiombato A."/>
            <person name="Apweiler R."/>
            <person name="Aturaliya R.N."/>
            <person name="Bailey T.L."/>
            <person name="Bansal M."/>
            <person name="Baxter L."/>
            <person name="Beisel K.W."/>
            <person name="Bersano T."/>
            <person name="Bono H."/>
            <person name="Chalk A.M."/>
            <person name="Chiu K.P."/>
            <person name="Choudhary V."/>
            <person name="Christoffels A."/>
            <person name="Clutterbuck D.R."/>
            <person name="Crowe M.L."/>
            <person name="Dalla E."/>
            <person name="Dalrymple B.P."/>
            <person name="de Bono B."/>
            <person name="Della Gatta G."/>
            <person name="di Bernardo D."/>
            <person name="Down T."/>
            <person name="Engstrom P."/>
            <person name="Fagiolini M."/>
            <person name="Faulkner G."/>
            <person name="Fletcher C.F."/>
            <person name="Fukushima T."/>
            <person name="Furuno M."/>
            <person name="Futaki S."/>
            <person name="Gariboldi M."/>
            <person name="Georgii-Hemming P."/>
            <person name="Gingeras T.R."/>
            <person name="Gojobori T."/>
            <person name="Green R.E."/>
            <person name="Gustincich S."/>
            <person name="Harbers M."/>
            <person name="Hayashi Y."/>
            <person name="Hensch T.K."/>
            <person name="Hirokawa N."/>
            <person name="Hill D."/>
            <person name="Huminiecki L."/>
            <person name="Iacono M."/>
            <person name="Ikeo K."/>
            <person name="Iwama A."/>
            <person name="Ishikawa T."/>
            <person name="Jakt M."/>
            <person name="Kanapin A."/>
            <person name="Katoh M."/>
            <person name="Kawasawa Y."/>
            <person name="Kelso J."/>
            <person name="Kitamura H."/>
            <person name="Kitano H."/>
            <person name="Kollias G."/>
            <person name="Krishnan S.P."/>
            <person name="Kruger A."/>
            <person name="Kummerfeld S.K."/>
            <person name="Kurochkin I.V."/>
            <person name="Lareau L.F."/>
            <person name="Lazarevic D."/>
            <person name="Lipovich L."/>
            <person name="Liu J."/>
            <person name="Liuni S."/>
            <person name="McWilliam S."/>
            <person name="Madan Babu M."/>
            <person name="Madera M."/>
            <person name="Marchionni L."/>
            <person name="Matsuda H."/>
            <person name="Matsuzawa S."/>
            <person name="Miki H."/>
            <person name="Mignone F."/>
            <person name="Miyake S."/>
            <person name="Morris K."/>
            <person name="Mottagui-Tabar S."/>
            <person name="Mulder N."/>
            <person name="Nakano N."/>
            <person name="Nakauchi H."/>
            <person name="Ng P."/>
            <person name="Nilsson R."/>
            <person name="Nishiguchi S."/>
            <person name="Nishikawa S."/>
            <person name="Nori F."/>
            <person name="Ohara O."/>
            <person name="Okazaki Y."/>
            <person name="Orlando V."/>
            <person name="Pang K.C."/>
            <person name="Pavan W.J."/>
            <person name="Pavesi G."/>
            <person name="Pesole G."/>
            <person name="Petrovsky N."/>
            <person name="Piazza S."/>
            <person name="Reed J."/>
            <person name="Reid J.F."/>
            <person name="Ring B.Z."/>
            <person name="Ringwald M."/>
            <person name="Rost B."/>
            <person name="Ruan Y."/>
            <person name="Salzberg S.L."/>
            <person name="Sandelin A."/>
            <person name="Schneider C."/>
            <person name="Schoenbach C."/>
            <person name="Sekiguchi K."/>
            <person name="Semple C.A."/>
            <person name="Seno S."/>
            <person name="Sessa L."/>
            <person name="Sheng Y."/>
            <person name="Shibata Y."/>
            <person name="Shimada H."/>
            <person name="Shimada K."/>
            <person name="Silva D."/>
            <person name="Sinclair B."/>
            <person name="Sperling S."/>
            <person name="Stupka E."/>
            <person name="Sugiura K."/>
            <person name="Sultana R."/>
            <person name="Takenaka Y."/>
            <person name="Taki K."/>
            <person name="Tammoja K."/>
            <person name="Tan S.L."/>
            <person name="Tang S."/>
            <person name="Taylor M.S."/>
            <person name="Tegner J."/>
            <person name="Teichmann S.A."/>
            <person name="Ueda H.R."/>
            <person name="van Nimwegen E."/>
            <person name="Verardo R."/>
            <person name="Wei C.L."/>
            <person name="Yagi K."/>
            <person name="Yamanishi H."/>
            <person name="Zabarovsky E."/>
            <person name="Zhu S."/>
            <person name="Zimmer A."/>
            <person name="Hide W."/>
            <person name="Bult C."/>
            <person name="Grimmond S.M."/>
            <person name="Teasdale R.D."/>
            <person name="Liu E.T."/>
            <person name="Brusic V."/>
            <person name="Quackenbush J."/>
            <person name="Wahlestedt C."/>
            <person name="Mattick J.S."/>
            <person name="Hume D.A."/>
            <person name="Kai C."/>
            <person name="Sasaki D."/>
            <person name="Tomaru Y."/>
            <person name="Fukuda S."/>
            <person name="Kanamori-Katayama M."/>
            <person name="Suzuki M."/>
            <person name="Aoki J."/>
            <person name="Arakawa T."/>
            <person name="Iida J."/>
            <person name="Imamura K."/>
            <person name="Itoh M."/>
            <person name="Kato T."/>
            <person name="Kawaji H."/>
            <person name="Kawagashira N."/>
            <person name="Kawashima T."/>
            <person name="Kojima M."/>
            <person name="Kondo S."/>
            <person name="Konno H."/>
            <person name="Nakano K."/>
            <person name="Ninomiya N."/>
            <person name="Nishio T."/>
            <person name="Okada M."/>
            <person name="Plessy C."/>
            <person name="Shibata K."/>
            <person name="Shiraki T."/>
            <person name="Suzuki S."/>
            <person name="Tagami M."/>
            <person name="Waki K."/>
            <person name="Watahiki A."/>
            <person name="Okamura-Oho Y."/>
            <person name="Suzuki H."/>
            <person name="Kawai J."/>
            <person name="Hayashizaki Y."/>
        </authorList>
    </citation>
    <scope>NUCLEOTIDE SEQUENCE [LARGE SCALE MRNA]</scope>
    <source>
        <strain>C57BL/6J</strain>
        <tissue>Cerebellum</tissue>
        <tissue>Embryo</tissue>
    </source>
</reference>
<reference key="5">
    <citation type="journal article" date="2004" name="Genome Res.">
        <title>The status, quality, and expansion of the NIH full-length cDNA project: the Mammalian Gene Collection (MGC).</title>
        <authorList>
            <consortium name="The MGC Project Team"/>
        </authorList>
    </citation>
    <scope>NUCLEOTIDE SEQUENCE [LARGE SCALE MRNA]</scope>
    <source>
        <strain>C57BL/6J</strain>
        <tissue>Eye</tissue>
        <tissue>Testis</tissue>
    </source>
</reference>
<reference key="6">
    <citation type="journal article" date="2006" name="J. Biol. Chem.">
        <title>Gonadotropin-regulated testicular RNA helicase (GRTH/Ddx25) is a transport protein involved in gene-specific mRNA export and protein translation during spermatogenesis.</title>
        <authorList>
            <person name="Sheng Y."/>
            <person name="Tsai-Morris C.-H."/>
            <person name="Gutti R."/>
            <person name="Maeda Y."/>
            <person name="Dufau M.L."/>
        </authorList>
    </citation>
    <scope>FUNCTION</scope>
    <scope>SUBCELLULAR LOCATION</scope>
    <scope>PHOSPHORYLATION</scope>
</reference>
<reference key="7">
    <citation type="journal article" date="2010" name="Cell">
        <title>A tissue-specific atlas of mouse protein phosphorylation and expression.</title>
        <authorList>
            <person name="Huttlin E.L."/>
            <person name="Jedrychowski M.P."/>
            <person name="Elias J.E."/>
            <person name="Goswami T."/>
            <person name="Rad R."/>
            <person name="Beausoleil S.A."/>
            <person name="Villen J."/>
            <person name="Haas W."/>
            <person name="Sowa M.E."/>
            <person name="Gygi S.P."/>
        </authorList>
    </citation>
    <scope>PHOSPHORYLATION [LARGE SCALE ANALYSIS] AT THR-49</scope>
    <scope>IDENTIFICATION BY MASS SPECTROMETRY [LARGE SCALE ANALYSIS]</scope>
    <source>
        <tissue>Testis</tissue>
    </source>
</reference>
<reference key="8">
    <citation type="journal article" date="2020" name="Sci. Rep.">
        <title>ADAD1 and ADAD2, testis-specific adenosine deaminase domain-containing proteins, are required for male fertility.</title>
        <authorList>
            <person name="Snyder E."/>
            <person name="Chukrallah L."/>
            <person name="Seltzer K."/>
            <person name="Goodwin L."/>
            <person name="Braun R.E."/>
        </authorList>
    </citation>
    <scope>SUBCELLULAR LOCATION</scope>
</reference>
<proteinExistence type="evidence at protein level"/>
<gene>
    <name type="primary">Ddx25</name>
    <name type="synonym">Grth</name>
</gene>
<keyword id="KW-0024">Alternative initiation</keyword>
<keyword id="KW-0067">ATP-binding</keyword>
<keyword id="KW-0963">Cytoplasm</keyword>
<keyword id="KW-0217">Developmental protein</keyword>
<keyword id="KW-0221">Differentiation</keyword>
<keyword id="KW-0347">Helicase</keyword>
<keyword id="KW-0378">Hydrolase</keyword>
<keyword id="KW-0509">mRNA transport</keyword>
<keyword id="KW-0547">Nucleotide-binding</keyword>
<keyword id="KW-0539">Nucleus</keyword>
<keyword id="KW-0597">Phosphoprotein</keyword>
<keyword id="KW-1185">Reference proteome</keyword>
<keyword id="KW-0694">RNA-binding</keyword>
<keyword id="KW-0744">Spermatogenesis</keyword>
<keyword id="KW-0810">Translation regulation</keyword>
<keyword id="KW-0813">Transport</keyword>
<name>DDX25_MOUSE</name>